<dbReference type="EC" id="3.2.2.23" evidence="2"/>
<dbReference type="EC" id="4.2.99.18" evidence="2"/>
<dbReference type="EMBL" id="CP001016">
    <property type="protein sequence ID" value="ACB94105.1"/>
    <property type="molecule type" value="Genomic_DNA"/>
</dbReference>
<dbReference type="RefSeq" id="WP_012383463.1">
    <property type="nucleotide sequence ID" value="NC_010581.1"/>
</dbReference>
<dbReference type="SMR" id="B2IE81"/>
<dbReference type="STRING" id="395963.Bind_0452"/>
<dbReference type="KEGG" id="bid:Bind_0452"/>
<dbReference type="eggNOG" id="COG0266">
    <property type="taxonomic scope" value="Bacteria"/>
</dbReference>
<dbReference type="HOGENOM" id="CLU_038423_1_1_5"/>
<dbReference type="OrthoDB" id="9800855at2"/>
<dbReference type="Proteomes" id="UP000001695">
    <property type="component" value="Chromosome"/>
</dbReference>
<dbReference type="GO" id="GO:0034039">
    <property type="term" value="F:8-oxo-7,8-dihydroguanine DNA N-glycosylase activity"/>
    <property type="evidence" value="ECO:0007669"/>
    <property type="project" value="TreeGrafter"/>
</dbReference>
<dbReference type="GO" id="GO:0140078">
    <property type="term" value="F:class I DNA-(apurinic or apyrimidinic site) endonuclease activity"/>
    <property type="evidence" value="ECO:0007669"/>
    <property type="project" value="UniProtKB-EC"/>
</dbReference>
<dbReference type="GO" id="GO:0003684">
    <property type="term" value="F:damaged DNA binding"/>
    <property type="evidence" value="ECO:0007669"/>
    <property type="project" value="InterPro"/>
</dbReference>
<dbReference type="GO" id="GO:0008270">
    <property type="term" value="F:zinc ion binding"/>
    <property type="evidence" value="ECO:0007669"/>
    <property type="project" value="UniProtKB-UniRule"/>
</dbReference>
<dbReference type="GO" id="GO:0006284">
    <property type="term" value="P:base-excision repair"/>
    <property type="evidence" value="ECO:0007669"/>
    <property type="project" value="InterPro"/>
</dbReference>
<dbReference type="CDD" id="cd08966">
    <property type="entry name" value="EcFpg-like_N"/>
    <property type="match status" value="1"/>
</dbReference>
<dbReference type="FunFam" id="1.10.8.50:FF:000003">
    <property type="entry name" value="Formamidopyrimidine-DNA glycosylase"/>
    <property type="match status" value="1"/>
</dbReference>
<dbReference type="Gene3D" id="1.10.8.50">
    <property type="match status" value="1"/>
</dbReference>
<dbReference type="Gene3D" id="3.20.190.10">
    <property type="entry name" value="MutM-like, N-terminal"/>
    <property type="match status" value="1"/>
</dbReference>
<dbReference type="HAMAP" id="MF_00103">
    <property type="entry name" value="Fapy_DNA_glycosyl"/>
    <property type="match status" value="1"/>
</dbReference>
<dbReference type="InterPro" id="IPR015886">
    <property type="entry name" value="DNA_glyclase/AP_lyase_DNA-bd"/>
</dbReference>
<dbReference type="InterPro" id="IPR015887">
    <property type="entry name" value="DNA_glyclase_Znf_dom_DNA_BS"/>
</dbReference>
<dbReference type="InterPro" id="IPR020629">
    <property type="entry name" value="Formamido-pyr_DNA_Glyclase"/>
</dbReference>
<dbReference type="InterPro" id="IPR012319">
    <property type="entry name" value="FPG_cat"/>
</dbReference>
<dbReference type="InterPro" id="IPR035937">
    <property type="entry name" value="MutM-like_N-ter"/>
</dbReference>
<dbReference type="InterPro" id="IPR010979">
    <property type="entry name" value="Ribosomal_uS13-like_H2TH"/>
</dbReference>
<dbReference type="InterPro" id="IPR000214">
    <property type="entry name" value="Znf_DNA_glyclase/AP_lyase"/>
</dbReference>
<dbReference type="InterPro" id="IPR010663">
    <property type="entry name" value="Znf_FPG/IleRS"/>
</dbReference>
<dbReference type="NCBIfam" id="TIGR00577">
    <property type="entry name" value="fpg"/>
    <property type="match status" value="1"/>
</dbReference>
<dbReference type="NCBIfam" id="NF002211">
    <property type="entry name" value="PRK01103.1"/>
    <property type="match status" value="1"/>
</dbReference>
<dbReference type="PANTHER" id="PTHR22993">
    <property type="entry name" value="FORMAMIDOPYRIMIDINE-DNA GLYCOSYLASE"/>
    <property type="match status" value="1"/>
</dbReference>
<dbReference type="PANTHER" id="PTHR22993:SF9">
    <property type="entry name" value="FORMAMIDOPYRIMIDINE-DNA GLYCOSYLASE"/>
    <property type="match status" value="1"/>
</dbReference>
<dbReference type="Pfam" id="PF01149">
    <property type="entry name" value="Fapy_DNA_glyco"/>
    <property type="match status" value="1"/>
</dbReference>
<dbReference type="Pfam" id="PF06831">
    <property type="entry name" value="H2TH"/>
    <property type="match status" value="1"/>
</dbReference>
<dbReference type="Pfam" id="PF06827">
    <property type="entry name" value="zf-FPG_IleRS"/>
    <property type="match status" value="1"/>
</dbReference>
<dbReference type="SMART" id="SM00898">
    <property type="entry name" value="Fapy_DNA_glyco"/>
    <property type="match status" value="1"/>
</dbReference>
<dbReference type="SMART" id="SM01232">
    <property type="entry name" value="H2TH"/>
    <property type="match status" value="1"/>
</dbReference>
<dbReference type="SUPFAM" id="SSF57716">
    <property type="entry name" value="Glucocorticoid receptor-like (DNA-binding domain)"/>
    <property type="match status" value="1"/>
</dbReference>
<dbReference type="SUPFAM" id="SSF81624">
    <property type="entry name" value="N-terminal domain of MutM-like DNA repair proteins"/>
    <property type="match status" value="1"/>
</dbReference>
<dbReference type="SUPFAM" id="SSF46946">
    <property type="entry name" value="S13-like H2TH domain"/>
    <property type="match status" value="1"/>
</dbReference>
<dbReference type="PROSITE" id="PS51068">
    <property type="entry name" value="FPG_CAT"/>
    <property type="match status" value="1"/>
</dbReference>
<dbReference type="PROSITE" id="PS01242">
    <property type="entry name" value="ZF_FPG_1"/>
    <property type="match status" value="1"/>
</dbReference>
<dbReference type="PROSITE" id="PS51066">
    <property type="entry name" value="ZF_FPG_2"/>
    <property type="match status" value="1"/>
</dbReference>
<comment type="function">
    <text evidence="2">Involved in base excision repair of DNA damaged by oxidation or by mutagenic agents. Acts as a DNA glycosylase that recognizes and removes damaged bases. Has a preference for oxidized purines, such as 7,8-dihydro-8-oxoguanine (8-oxoG). Has AP (apurinic/apyrimidinic) lyase activity and introduces nicks in the DNA strand. Cleaves the DNA backbone by beta-delta elimination to generate a single-strand break at the site of the removed base with both 3'- and 5'-phosphates.</text>
</comment>
<comment type="catalytic activity">
    <reaction evidence="2">
        <text>Hydrolysis of DNA containing ring-opened 7-methylguanine residues, releasing 2,6-diamino-4-hydroxy-5-(N-methyl)formamidopyrimidine.</text>
        <dbReference type="EC" id="3.2.2.23"/>
    </reaction>
</comment>
<comment type="catalytic activity">
    <reaction evidence="2">
        <text>2'-deoxyribonucleotide-(2'-deoxyribose 5'-phosphate)-2'-deoxyribonucleotide-DNA = a 3'-end 2'-deoxyribonucleotide-(2,3-dehydro-2,3-deoxyribose 5'-phosphate)-DNA + a 5'-end 5'-phospho-2'-deoxyribonucleoside-DNA + H(+)</text>
        <dbReference type="Rhea" id="RHEA:66592"/>
        <dbReference type="Rhea" id="RHEA-COMP:13180"/>
        <dbReference type="Rhea" id="RHEA-COMP:16897"/>
        <dbReference type="Rhea" id="RHEA-COMP:17067"/>
        <dbReference type="ChEBI" id="CHEBI:15378"/>
        <dbReference type="ChEBI" id="CHEBI:136412"/>
        <dbReference type="ChEBI" id="CHEBI:157695"/>
        <dbReference type="ChEBI" id="CHEBI:167181"/>
        <dbReference type="EC" id="4.2.99.18"/>
    </reaction>
</comment>
<comment type="cofactor">
    <cofactor evidence="2">
        <name>Zn(2+)</name>
        <dbReference type="ChEBI" id="CHEBI:29105"/>
    </cofactor>
    <text evidence="2">Binds 1 zinc ion per subunit.</text>
</comment>
<comment type="subunit">
    <text evidence="2">Monomer.</text>
</comment>
<comment type="similarity">
    <text evidence="2">Belongs to the FPG family.</text>
</comment>
<reference key="1">
    <citation type="journal article" date="2010" name="J. Bacteriol.">
        <title>Complete genome sequence of Beijerinckia indica subsp. indica.</title>
        <authorList>
            <person name="Tamas I."/>
            <person name="Dedysh S.N."/>
            <person name="Liesack W."/>
            <person name="Stott M.B."/>
            <person name="Alam M."/>
            <person name="Murrell J.C."/>
            <person name="Dunfield P.F."/>
        </authorList>
    </citation>
    <scope>NUCLEOTIDE SEQUENCE [LARGE SCALE GENOMIC DNA]</scope>
    <source>
        <strain>ATCC 9039 / DSM 1715 / NCIMB 8712</strain>
    </source>
</reference>
<sequence>MPELPEVETVRRGLAPVMVGASFTTVEQRRADLRFPFPDNFAARLEGRRVEALGRRAKYLLADLDDAQVLVMHLGMSGSFRIEKAGDLASPPPGKNAAHDHVVFGLSTGTRIIYNDPRRFGFMHLIARQDLAGHPLFRNVGIEPLGNELEGALLARLFAGKTTPLKTALLDQTLIAGLGNIYVCEALHRAGLSPRRAAGTLAGKKGQPTERAHRLSEIIRAVLEEAIEAGGSSLRDHRQADGALGYFQHRFRVYDREAEPCPREGCGGTIKRIVQAGRSTFFCAKCQR</sequence>
<gene>
    <name evidence="2" type="primary">mutM</name>
    <name evidence="2" type="synonym">fpg</name>
    <name type="ordered locus">Bind_0452</name>
</gene>
<accession>B2IE81</accession>
<evidence type="ECO:0000250" key="1"/>
<evidence type="ECO:0000255" key="2">
    <source>
        <dbReference type="HAMAP-Rule" id="MF_00103"/>
    </source>
</evidence>
<protein>
    <recommendedName>
        <fullName evidence="2">Formamidopyrimidine-DNA glycosylase</fullName>
        <shortName evidence="2">Fapy-DNA glycosylase</shortName>
        <ecNumber evidence="2">3.2.2.23</ecNumber>
    </recommendedName>
    <alternativeName>
        <fullName evidence="2">DNA-(apurinic or apyrimidinic site) lyase MutM</fullName>
        <shortName evidence="2">AP lyase MutM</shortName>
        <ecNumber evidence="2">4.2.99.18</ecNumber>
    </alternativeName>
</protein>
<keyword id="KW-0227">DNA damage</keyword>
<keyword id="KW-0234">DNA repair</keyword>
<keyword id="KW-0238">DNA-binding</keyword>
<keyword id="KW-0326">Glycosidase</keyword>
<keyword id="KW-0378">Hydrolase</keyword>
<keyword id="KW-0456">Lyase</keyword>
<keyword id="KW-0479">Metal-binding</keyword>
<keyword id="KW-0511">Multifunctional enzyme</keyword>
<keyword id="KW-1185">Reference proteome</keyword>
<keyword id="KW-0862">Zinc</keyword>
<keyword id="KW-0863">Zinc-finger</keyword>
<organism>
    <name type="scientific">Beijerinckia indica subsp. indica (strain ATCC 9039 / DSM 1715 / NCIMB 8712)</name>
    <dbReference type="NCBI Taxonomy" id="395963"/>
    <lineage>
        <taxon>Bacteria</taxon>
        <taxon>Pseudomonadati</taxon>
        <taxon>Pseudomonadota</taxon>
        <taxon>Alphaproteobacteria</taxon>
        <taxon>Hyphomicrobiales</taxon>
        <taxon>Beijerinckiaceae</taxon>
        <taxon>Beijerinckia</taxon>
    </lineage>
</organism>
<proteinExistence type="inferred from homology"/>
<name>FPG_BEII9</name>
<feature type="initiator methionine" description="Removed" evidence="1">
    <location>
        <position position="1"/>
    </location>
</feature>
<feature type="chain" id="PRO_1000094030" description="Formamidopyrimidine-DNA glycosylase">
    <location>
        <begin position="2"/>
        <end position="288"/>
    </location>
</feature>
<feature type="zinc finger region" description="FPG-type" evidence="2">
    <location>
        <begin position="252"/>
        <end position="288"/>
    </location>
</feature>
<feature type="active site" description="Schiff-base intermediate with DNA" evidence="2">
    <location>
        <position position="2"/>
    </location>
</feature>
<feature type="active site" description="Proton donor" evidence="2">
    <location>
        <position position="3"/>
    </location>
</feature>
<feature type="active site" description="Proton donor; for beta-elimination activity" evidence="2">
    <location>
        <position position="58"/>
    </location>
</feature>
<feature type="active site" description="Proton donor; for delta-elimination activity" evidence="2">
    <location>
        <position position="278"/>
    </location>
</feature>
<feature type="binding site" evidence="2">
    <location>
        <position position="99"/>
    </location>
    <ligand>
        <name>DNA</name>
        <dbReference type="ChEBI" id="CHEBI:16991"/>
    </ligand>
</feature>
<feature type="binding site" evidence="2">
    <location>
        <position position="118"/>
    </location>
    <ligand>
        <name>DNA</name>
        <dbReference type="ChEBI" id="CHEBI:16991"/>
    </ligand>
</feature>
<feature type="binding site" evidence="2">
    <location>
        <position position="161"/>
    </location>
    <ligand>
        <name>DNA</name>
        <dbReference type="ChEBI" id="CHEBI:16991"/>
    </ligand>
</feature>